<accession>A4ST47</accession>
<protein>
    <recommendedName>
        <fullName evidence="1">Probable GTP-binding protein EngB</fullName>
    </recommendedName>
</protein>
<keyword id="KW-0131">Cell cycle</keyword>
<keyword id="KW-0132">Cell division</keyword>
<keyword id="KW-0342">GTP-binding</keyword>
<keyword id="KW-0460">Magnesium</keyword>
<keyword id="KW-0479">Metal-binding</keyword>
<keyword id="KW-0547">Nucleotide-binding</keyword>
<keyword id="KW-0717">Septation</keyword>
<evidence type="ECO:0000255" key="1">
    <source>
        <dbReference type="HAMAP-Rule" id="MF_00321"/>
    </source>
</evidence>
<proteinExistence type="inferred from homology"/>
<feature type="chain" id="PRO_1000005795" description="Probable GTP-binding protein EngB">
    <location>
        <begin position="1"/>
        <end position="217"/>
    </location>
</feature>
<feature type="domain" description="EngB-type G" evidence="1">
    <location>
        <begin position="27"/>
        <end position="201"/>
    </location>
</feature>
<feature type="binding site" evidence="1">
    <location>
        <begin position="35"/>
        <end position="42"/>
    </location>
    <ligand>
        <name>GTP</name>
        <dbReference type="ChEBI" id="CHEBI:37565"/>
    </ligand>
</feature>
<feature type="binding site" evidence="1">
    <location>
        <position position="42"/>
    </location>
    <ligand>
        <name>Mg(2+)</name>
        <dbReference type="ChEBI" id="CHEBI:18420"/>
    </ligand>
</feature>
<feature type="binding site" evidence="1">
    <location>
        <begin position="62"/>
        <end position="66"/>
    </location>
    <ligand>
        <name>GTP</name>
        <dbReference type="ChEBI" id="CHEBI:37565"/>
    </ligand>
</feature>
<feature type="binding site" evidence="1">
    <location>
        <position position="64"/>
    </location>
    <ligand>
        <name>Mg(2+)</name>
        <dbReference type="ChEBI" id="CHEBI:18420"/>
    </ligand>
</feature>
<feature type="binding site" evidence="1">
    <location>
        <begin position="80"/>
        <end position="83"/>
    </location>
    <ligand>
        <name>GTP</name>
        <dbReference type="ChEBI" id="CHEBI:37565"/>
    </ligand>
</feature>
<feature type="binding site" evidence="1">
    <location>
        <begin position="147"/>
        <end position="150"/>
    </location>
    <ligand>
        <name>GTP</name>
        <dbReference type="ChEBI" id="CHEBI:37565"/>
    </ligand>
</feature>
<feature type="binding site" evidence="1">
    <location>
        <begin position="180"/>
        <end position="182"/>
    </location>
    <ligand>
        <name>GTP</name>
        <dbReference type="ChEBI" id="CHEBI:37565"/>
    </ligand>
</feature>
<dbReference type="EMBL" id="CP000644">
    <property type="protein sequence ID" value="ABO92069.1"/>
    <property type="molecule type" value="Genomic_DNA"/>
</dbReference>
<dbReference type="SMR" id="A4ST47"/>
<dbReference type="STRING" id="29491.GCA_000820065_03422"/>
<dbReference type="KEGG" id="asa:ASA_4129"/>
<dbReference type="eggNOG" id="COG0218">
    <property type="taxonomic scope" value="Bacteria"/>
</dbReference>
<dbReference type="HOGENOM" id="CLU_033732_1_2_6"/>
<dbReference type="Proteomes" id="UP000000225">
    <property type="component" value="Chromosome"/>
</dbReference>
<dbReference type="GO" id="GO:0005829">
    <property type="term" value="C:cytosol"/>
    <property type="evidence" value="ECO:0007669"/>
    <property type="project" value="TreeGrafter"/>
</dbReference>
<dbReference type="GO" id="GO:0005525">
    <property type="term" value="F:GTP binding"/>
    <property type="evidence" value="ECO:0007669"/>
    <property type="project" value="UniProtKB-UniRule"/>
</dbReference>
<dbReference type="GO" id="GO:0046872">
    <property type="term" value="F:metal ion binding"/>
    <property type="evidence" value="ECO:0007669"/>
    <property type="project" value="UniProtKB-KW"/>
</dbReference>
<dbReference type="GO" id="GO:0000917">
    <property type="term" value="P:division septum assembly"/>
    <property type="evidence" value="ECO:0007669"/>
    <property type="project" value="UniProtKB-KW"/>
</dbReference>
<dbReference type="CDD" id="cd01876">
    <property type="entry name" value="YihA_EngB"/>
    <property type="match status" value="1"/>
</dbReference>
<dbReference type="FunFam" id="3.40.50.300:FF:000098">
    <property type="entry name" value="Probable GTP-binding protein EngB"/>
    <property type="match status" value="1"/>
</dbReference>
<dbReference type="Gene3D" id="3.40.50.300">
    <property type="entry name" value="P-loop containing nucleotide triphosphate hydrolases"/>
    <property type="match status" value="1"/>
</dbReference>
<dbReference type="HAMAP" id="MF_00321">
    <property type="entry name" value="GTPase_EngB"/>
    <property type="match status" value="1"/>
</dbReference>
<dbReference type="InterPro" id="IPR030393">
    <property type="entry name" value="G_ENGB_dom"/>
</dbReference>
<dbReference type="InterPro" id="IPR006073">
    <property type="entry name" value="GTP-bd"/>
</dbReference>
<dbReference type="InterPro" id="IPR019987">
    <property type="entry name" value="GTP-bd_ribosome_bio_YsxC"/>
</dbReference>
<dbReference type="InterPro" id="IPR027417">
    <property type="entry name" value="P-loop_NTPase"/>
</dbReference>
<dbReference type="NCBIfam" id="TIGR03598">
    <property type="entry name" value="GTPase_YsxC"/>
    <property type="match status" value="1"/>
</dbReference>
<dbReference type="PANTHER" id="PTHR11649:SF13">
    <property type="entry name" value="ENGB-TYPE G DOMAIN-CONTAINING PROTEIN"/>
    <property type="match status" value="1"/>
</dbReference>
<dbReference type="PANTHER" id="PTHR11649">
    <property type="entry name" value="MSS1/TRME-RELATED GTP-BINDING PROTEIN"/>
    <property type="match status" value="1"/>
</dbReference>
<dbReference type="Pfam" id="PF01926">
    <property type="entry name" value="MMR_HSR1"/>
    <property type="match status" value="1"/>
</dbReference>
<dbReference type="SUPFAM" id="SSF52540">
    <property type="entry name" value="P-loop containing nucleoside triphosphate hydrolases"/>
    <property type="match status" value="1"/>
</dbReference>
<dbReference type="PROSITE" id="PS51706">
    <property type="entry name" value="G_ENGB"/>
    <property type="match status" value="1"/>
</dbReference>
<name>ENGB_AERS4</name>
<reference key="1">
    <citation type="journal article" date="2008" name="BMC Genomics">
        <title>The genome of Aeromonas salmonicida subsp. salmonicida A449: insights into the evolution of a fish pathogen.</title>
        <authorList>
            <person name="Reith M.E."/>
            <person name="Singh R.K."/>
            <person name="Curtis B."/>
            <person name="Boyd J.M."/>
            <person name="Bouevitch A."/>
            <person name="Kimball J."/>
            <person name="Munholland J."/>
            <person name="Murphy C."/>
            <person name="Sarty D."/>
            <person name="Williams J."/>
            <person name="Nash J.H."/>
            <person name="Johnson S.C."/>
            <person name="Brown L.L."/>
        </authorList>
    </citation>
    <scope>NUCLEOTIDE SEQUENCE [LARGE SCALE GENOMIC DNA]</scope>
    <source>
        <strain>A449</strain>
    </source>
</reference>
<organism>
    <name type="scientific">Aeromonas salmonicida (strain A449)</name>
    <dbReference type="NCBI Taxonomy" id="382245"/>
    <lineage>
        <taxon>Bacteria</taxon>
        <taxon>Pseudomonadati</taxon>
        <taxon>Pseudomonadota</taxon>
        <taxon>Gammaproteobacteria</taxon>
        <taxon>Aeromonadales</taxon>
        <taxon>Aeromonadaceae</taxon>
        <taxon>Aeromonas</taxon>
    </lineage>
</organism>
<sequence length="217" mass="24269">MDTQTLNFNKVHFVTSAPDIRHLPNDGGVEIAFAGRSNAGKSSALNTLTKHKNLARTSKTPGRTQLINLFELEPGKRLVDLPGYGYAQVPLEMKLKWQKSLAEYLQRRESLKGLVILMDIRHPLKDTDMNMLEWSSHRELPVMLLLTKADKLSPGPRNNQVIKVRQAIADLGPQIQVEAFSSLNNIGVEKLAQTLSGWYLAGADEIADNDEQEQVEE</sequence>
<gene>
    <name evidence="1" type="primary">engB</name>
    <name type="ordered locus">ASA_4129</name>
</gene>
<comment type="function">
    <text evidence="1">Necessary for normal cell division and for the maintenance of normal septation.</text>
</comment>
<comment type="cofactor">
    <cofactor evidence="1">
        <name>Mg(2+)</name>
        <dbReference type="ChEBI" id="CHEBI:18420"/>
    </cofactor>
</comment>
<comment type="similarity">
    <text evidence="1">Belongs to the TRAFAC class TrmE-Era-EngA-EngB-Septin-like GTPase superfamily. EngB GTPase family.</text>
</comment>